<accession>C3LLV3</accession>
<organism>
    <name type="scientific">Vibrio cholerae serotype O1 (strain M66-2)</name>
    <dbReference type="NCBI Taxonomy" id="579112"/>
    <lineage>
        <taxon>Bacteria</taxon>
        <taxon>Pseudomonadati</taxon>
        <taxon>Pseudomonadota</taxon>
        <taxon>Gammaproteobacteria</taxon>
        <taxon>Vibrionales</taxon>
        <taxon>Vibrionaceae</taxon>
        <taxon>Vibrio</taxon>
    </lineage>
</organism>
<gene>
    <name evidence="1" type="primary">ubiG</name>
    <name type="ordered locus">VCM66_1212</name>
</gene>
<name>UBIG_VIBCM</name>
<proteinExistence type="inferred from homology"/>
<sequence>MASIDLASTPLTATQNVDPNEIKKFEDMASRWWDLEGEFKPLHQINPLRLNYVLEKANGLFGKRVLDVGCGGGILAESMAREGAQVTGLDMGKEPLEVARLHALETGTKLTYIQSTVEAHAEANPHTYDVVTCMEMLEHVPDPLSVIQSCAKLVKPGGHVFFSTLNRNVKSYLFAIVGAEKLLKIVPEGTHDHNKFIRPSELLKMVDHTALQEQGITGLHYNPFTDTYRLGSNVDVNYIVHTRLF</sequence>
<evidence type="ECO:0000255" key="1">
    <source>
        <dbReference type="HAMAP-Rule" id="MF_00472"/>
    </source>
</evidence>
<keyword id="KW-0489">Methyltransferase</keyword>
<keyword id="KW-0949">S-adenosyl-L-methionine</keyword>
<keyword id="KW-0808">Transferase</keyword>
<keyword id="KW-0831">Ubiquinone biosynthesis</keyword>
<dbReference type="EC" id="2.1.1.222" evidence="1"/>
<dbReference type="EC" id="2.1.1.64" evidence="1"/>
<dbReference type="EMBL" id="CP001233">
    <property type="protein sequence ID" value="ACP05529.1"/>
    <property type="molecule type" value="Genomic_DNA"/>
</dbReference>
<dbReference type="RefSeq" id="WP_000146463.1">
    <property type="nucleotide sequence ID" value="NC_012578.1"/>
</dbReference>
<dbReference type="SMR" id="C3LLV3"/>
<dbReference type="GeneID" id="89514221"/>
<dbReference type="KEGG" id="vcm:VCM66_1212"/>
<dbReference type="HOGENOM" id="CLU_042432_5_0_6"/>
<dbReference type="UniPathway" id="UPA00232"/>
<dbReference type="Proteomes" id="UP000001217">
    <property type="component" value="Chromosome I"/>
</dbReference>
<dbReference type="GO" id="GO:0102208">
    <property type="term" value="F:2-polyprenyl-6-hydroxyphenol methylase activity"/>
    <property type="evidence" value="ECO:0007669"/>
    <property type="project" value="UniProtKB-EC"/>
</dbReference>
<dbReference type="GO" id="GO:0061542">
    <property type="term" value="F:3-demethylubiquinol 3-O-methyltransferase activity"/>
    <property type="evidence" value="ECO:0007669"/>
    <property type="project" value="UniProtKB-UniRule"/>
</dbReference>
<dbReference type="GO" id="GO:0010420">
    <property type="term" value="F:polyprenyldihydroxybenzoate methyltransferase activity"/>
    <property type="evidence" value="ECO:0007669"/>
    <property type="project" value="InterPro"/>
</dbReference>
<dbReference type="GO" id="GO:0032259">
    <property type="term" value="P:methylation"/>
    <property type="evidence" value="ECO:0007669"/>
    <property type="project" value="UniProtKB-KW"/>
</dbReference>
<dbReference type="CDD" id="cd02440">
    <property type="entry name" value="AdoMet_MTases"/>
    <property type="match status" value="1"/>
</dbReference>
<dbReference type="FunFam" id="3.40.50.150:FF:000028">
    <property type="entry name" value="Ubiquinone biosynthesis O-methyltransferase"/>
    <property type="match status" value="1"/>
</dbReference>
<dbReference type="Gene3D" id="3.40.50.150">
    <property type="entry name" value="Vaccinia Virus protein VP39"/>
    <property type="match status" value="1"/>
</dbReference>
<dbReference type="HAMAP" id="MF_00472">
    <property type="entry name" value="UbiG"/>
    <property type="match status" value="1"/>
</dbReference>
<dbReference type="InterPro" id="IPR029063">
    <property type="entry name" value="SAM-dependent_MTases_sf"/>
</dbReference>
<dbReference type="InterPro" id="IPR010233">
    <property type="entry name" value="UbiG_MeTrfase"/>
</dbReference>
<dbReference type="NCBIfam" id="TIGR01983">
    <property type="entry name" value="UbiG"/>
    <property type="match status" value="1"/>
</dbReference>
<dbReference type="PANTHER" id="PTHR43464">
    <property type="entry name" value="METHYLTRANSFERASE"/>
    <property type="match status" value="1"/>
</dbReference>
<dbReference type="PANTHER" id="PTHR43464:SF19">
    <property type="entry name" value="UBIQUINONE BIOSYNTHESIS O-METHYLTRANSFERASE, MITOCHONDRIAL"/>
    <property type="match status" value="1"/>
</dbReference>
<dbReference type="Pfam" id="PF13489">
    <property type="entry name" value="Methyltransf_23"/>
    <property type="match status" value="1"/>
</dbReference>
<dbReference type="SUPFAM" id="SSF53335">
    <property type="entry name" value="S-adenosyl-L-methionine-dependent methyltransferases"/>
    <property type="match status" value="1"/>
</dbReference>
<comment type="function">
    <text evidence="1">O-methyltransferase that catalyzes the 2 O-methylation steps in the ubiquinone biosynthetic pathway.</text>
</comment>
<comment type="catalytic activity">
    <reaction evidence="1">
        <text>a 3-demethylubiquinol + S-adenosyl-L-methionine = a ubiquinol + S-adenosyl-L-homocysteine + H(+)</text>
        <dbReference type="Rhea" id="RHEA:44380"/>
        <dbReference type="Rhea" id="RHEA-COMP:9566"/>
        <dbReference type="Rhea" id="RHEA-COMP:10914"/>
        <dbReference type="ChEBI" id="CHEBI:15378"/>
        <dbReference type="ChEBI" id="CHEBI:17976"/>
        <dbReference type="ChEBI" id="CHEBI:57856"/>
        <dbReference type="ChEBI" id="CHEBI:59789"/>
        <dbReference type="ChEBI" id="CHEBI:84422"/>
        <dbReference type="EC" id="2.1.1.64"/>
    </reaction>
</comment>
<comment type="catalytic activity">
    <reaction evidence="1">
        <text>a 3-(all-trans-polyprenyl)benzene-1,2-diol + S-adenosyl-L-methionine = a 2-methoxy-6-(all-trans-polyprenyl)phenol + S-adenosyl-L-homocysteine + H(+)</text>
        <dbReference type="Rhea" id="RHEA:31411"/>
        <dbReference type="Rhea" id="RHEA-COMP:9550"/>
        <dbReference type="Rhea" id="RHEA-COMP:9551"/>
        <dbReference type="ChEBI" id="CHEBI:15378"/>
        <dbReference type="ChEBI" id="CHEBI:57856"/>
        <dbReference type="ChEBI" id="CHEBI:59789"/>
        <dbReference type="ChEBI" id="CHEBI:62729"/>
        <dbReference type="ChEBI" id="CHEBI:62731"/>
        <dbReference type="EC" id="2.1.1.222"/>
    </reaction>
</comment>
<comment type="pathway">
    <text evidence="1">Cofactor biosynthesis; ubiquinone biosynthesis.</text>
</comment>
<comment type="similarity">
    <text evidence="1">Belongs to the methyltransferase superfamily. UbiG/COQ3 family.</text>
</comment>
<feature type="chain" id="PRO_1000135513" description="Ubiquinone biosynthesis O-methyltransferase">
    <location>
        <begin position="1"/>
        <end position="245"/>
    </location>
</feature>
<feature type="binding site" evidence="1">
    <location>
        <position position="49"/>
    </location>
    <ligand>
        <name>S-adenosyl-L-methionine</name>
        <dbReference type="ChEBI" id="CHEBI:59789"/>
    </ligand>
</feature>
<feature type="binding site" evidence="1">
    <location>
        <position position="69"/>
    </location>
    <ligand>
        <name>S-adenosyl-L-methionine</name>
        <dbReference type="ChEBI" id="CHEBI:59789"/>
    </ligand>
</feature>
<feature type="binding site" evidence="1">
    <location>
        <position position="90"/>
    </location>
    <ligand>
        <name>S-adenosyl-L-methionine</name>
        <dbReference type="ChEBI" id="CHEBI:59789"/>
    </ligand>
</feature>
<feature type="binding site" evidence="1">
    <location>
        <position position="134"/>
    </location>
    <ligand>
        <name>S-adenosyl-L-methionine</name>
        <dbReference type="ChEBI" id="CHEBI:59789"/>
    </ligand>
</feature>
<reference key="1">
    <citation type="journal article" date="2008" name="PLoS ONE">
        <title>A recalibrated molecular clock and independent origins for the cholera pandemic clones.</title>
        <authorList>
            <person name="Feng L."/>
            <person name="Reeves P.R."/>
            <person name="Lan R."/>
            <person name="Ren Y."/>
            <person name="Gao C."/>
            <person name="Zhou Z."/>
            <person name="Ren Y."/>
            <person name="Cheng J."/>
            <person name="Wang W."/>
            <person name="Wang J."/>
            <person name="Qian W."/>
            <person name="Li D."/>
            <person name="Wang L."/>
        </authorList>
    </citation>
    <scope>NUCLEOTIDE SEQUENCE [LARGE SCALE GENOMIC DNA]</scope>
    <source>
        <strain>M66-2</strain>
    </source>
</reference>
<protein>
    <recommendedName>
        <fullName evidence="1">Ubiquinone biosynthesis O-methyltransferase</fullName>
    </recommendedName>
    <alternativeName>
        <fullName evidence="1">2-polyprenyl-6-hydroxyphenol methylase</fullName>
        <ecNumber evidence="1">2.1.1.222</ecNumber>
    </alternativeName>
    <alternativeName>
        <fullName evidence="1">3-demethylubiquinone 3-O-methyltransferase</fullName>
        <ecNumber evidence="1">2.1.1.64</ecNumber>
    </alternativeName>
</protein>